<proteinExistence type="evidence at transcript level"/>
<protein>
    <recommendedName>
        <fullName>Lymphocyte antigen 6 complex locus protein G6c</fullName>
    </recommendedName>
</protein>
<organism>
    <name type="scientific">Bos taurus</name>
    <name type="common">Bovine</name>
    <dbReference type="NCBI Taxonomy" id="9913"/>
    <lineage>
        <taxon>Eukaryota</taxon>
        <taxon>Metazoa</taxon>
        <taxon>Chordata</taxon>
        <taxon>Craniata</taxon>
        <taxon>Vertebrata</taxon>
        <taxon>Euteleostomi</taxon>
        <taxon>Mammalia</taxon>
        <taxon>Eutheria</taxon>
        <taxon>Laurasiatheria</taxon>
        <taxon>Artiodactyla</taxon>
        <taxon>Ruminantia</taxon>
        <taxon>Pecora</taxon>
        <taxon>Bovidae</taxon>
        <taxon>Bovinae</taxon>
        <taxon>Bos</taxon>
    </lineage>
</organism>
<dbReference type="EMBL" id="BC126760">
    <property type="protein sequence ID" value="AAI26761.1"/>
    <property type="molecule type" value="mRNA"/>
</dbReference>
<dbReference type="RefSeq" id="NP_001071324.1">
    <property type="nucleotide sequence ID" value="NM_001077856.1"/>
</dbReference>
<dbReference type="SMR" id="A0JNL5"/>
<dbReference type="FunCoup" id="A0JNL5">
    <property type="interactions" value="22"/>
</dbReference>
<dbReference type="STRING" id="9913.ENSBTAP00000069016"/>
<dbReference type="GlyCosmos" id="A0JNL5">
    <property type="glycosylation" value="1 site, No reported glycans"/>
</dbReference>
<dbReference type="GlyGen" id="A0JNL5">
    <property type="glycosylation" value="1 site"/>
</dbReference>
<dbReference type="PaxDb" id="9913-ENSBTAP00000000767"/>
<dbReference type="GeneID" id="505805"/>
<dbReference type="KEGG" id="bta:505805"/>
<dbReference type="CTD" id="80740"/>
<dbReference type="VEuPathDB" id="HostDB:ENSBTAG00000000585"/>
<dbReference type="eggNOG" id="ENOG502T0T6">
    <property type="taxonomic scope" value="Eukaryota"/>
</dbReference>
<dbReference type="HOGENOM" id="CLU_1991884_0_0_1"/>
<dbReference type="InParanoid" id="A0JNL5"/>
<dbReference type="OMA" id="YNTTCCS"/>
<dbReference type="OrthoDB" id="9828511at2759"/>
<dbReference type="TreeFam" id="TF337667"/>
<dbReference type="Reactome" id="R-BTA-163125">
    <property type="pathway name" value="Post-translational modification: synthesis of GPI-anchored proteins"/>
</dbReference>
<dbReference type="Proteomes" id="UP000009136">
    <property type="component" value="Chromosome 23"/>
</dbReference>
<dbReference type="Bgee" id="ENSBTAG00000000585">
    <property type="expression patterns" value="Expressed in surface of tongue and 64 other cell types or tissues"/>
</dbReference>
<dbReference type="GO" id="GO:0005886">
    <property type="term" value="C:plasma membrane"/>
    <property type="evidence" value="ECO:0007669"/>
    <property type="project" value="UniProtKB-SubCell"/>
</dbReference>
<dbReference type="GO" id="GO:0032991">
    <property type="term" value="C:protein-containing complex"/>
    <property type="evidence" value="ECO:0000318"/>
    <property type="project" value="GO_Central"/>
</dbReference>
<dbReference type="GO" id="GO:0098552">
    <property type="term" value="C:side of membrane"/>
    <property type="evidence" value="ECO:0007669"/>
    <property type="project" value="UniProtKB-KW"/>
</dbReference>
<dbReference type="CDD" id="cd23546">
    <property type="entry name" value="TFP_LU_ECD_Ly6G6c"/>
    <property type="match status" value="1"/>
</dbReference>
<dbReference type="InterPro" id="IPR016054">
    <property type="entry name" value="LY6_UPA_recep-like"/>
</dbReference>
<dbReference type="InterPro" id="IPR039237">
    <property type="entry name" value="LY6G6C"/>
</dbReference>
<dbReference type="InterPro" id="IPR045860">
    <property type="entry name" value="Snake_toxin-like_sf"/>
</dbReference>
<dbReference type="PANTHER" id="PTHR32149">
    <property type="entry name" value="LYMPHOCYTE ANTIGEN 6 COMPLEX LOCUS PROTEIN G6C"/>
    <property type="match status" value="1"/>
</dbReference>
<dbReference type="PANTHER" id="PTHR32149:SF2">
    <property type="entry name" value="LYMPHOCYTE ANTIGEN 6 COMPLEX LOCUS PROTEIN G6C"/>
    <property type="match status" value="1"/>
</dbReference>
<dbReference type="Pfam" id="PF00021">
    <property type="entry name" value="UPAR_LY6"/>
    <property type="match status" value="1"/>
</dbReference>
<dbReference type="SUPFAM" id="SSF57302">
    <property type="entry name" value="Snake toxin-like"/>
    <property type="match status" value="1"/>
</dbReference>
<comment type="subcellular location">
    <subcellularLocation>
        <location evidence="3">Cell membrane</location>
        <topology evidence="3">Lipid-anchor</topology>
        <topology evidence="3">GPI-anchor</topology>
    </subcellularLocation>
</comment>
<comment type="PTM">
    <text evidence="1">N-glycosylated.</text>
</comment>
<evidence type="ECO:0000250" key="1"/>
<evidence type="ECO:0000255" key="2"/>
<evidence type="ECO:0000305" key="3"/>
<gene>
    <name type="primary">LY6G6C</name>
</gene>
<keyword id="KW-1003">Cell membrane</keyword>
<keyword id="KW-1015">Disulfide bond</keyword>
<keyword id="KW-0325">Glycoprotein</keyword>
<keyword id="KW-0336">GPI-anchor</keyword>
<keyword id="KW-0449">Lipoprotein</keyword>
<keyword id="KW-0472">Membrane</keyword>
<keyword id="KW-1185">Reference proteome</keyword>
<keyword id="KW-0732">Signal</keyword>
<sequence length="125" mass="13625">MRALLLLSLSALLCWVSADIRCHSCYKLPVLGCVDRKSCRLEPGQQCLTTHAYIGKMWVFSRLDCGTPGEPCKPAVNQTNQKGGLTYNTTCCSQDNCNSPAPRPTPALTLVFLTSLAGLGLWLLH</sequence>
<accession>A0JNL5</accession>
<reference key="1">
    <citation type="submission" date="2006-10" db="EMBL/GenBank/DDBJ databases">
        <authorList>
            <consortium name="NIH - Mammalian Gene Collection (MGC) project"/>
        </authorList>
    </citation>
    <scope>NUCLEOTIDE SEQUENCE [LARGE SCALE MRNA]</scope>
    <source>
        <strain>Hereford</strain>
        <tissue>Fetal skin</tissue>
    </source>
</reference>
<name>LY66C_BOVIN</name>
<feature type="signal peptide" evidence="2">
    <location>
        <begin position="1"/>
        <end position="18"/>
    </location>
</feature>
<feature type="chain" id="PRO_0000323021" description="Lymphocyte antigen 6 complex locus protein G6c">
    <location>
        <begin position="19"/>
        <end position="99"/>
    </location>
</feature>
<feature type="propeptide" id="PRO_0000323022" description="Removed in mature form" evidence="2">
    <location>
        <begin position="100"/>
        <end position="125"/>
    </location>
</feature>
<feature type="domain" description="UPAR/Ly6">
    <location>
        <begin position="20"/>
        <end position="111"/>
    </location>
</feature>
<feature type="lipid moiety-binding region" description="GPI-anchor amidated serine" evidence="2">
    <location>
        <position position="99"/>
    </location>
</feature>
<feature type="glycosylation site" description="N-linked (GlcNAc...) asparagine" evidence="2">
    <location>
        <position position="88"/>
    </location>
</feature>
<feature type="disulfide bond" evidence="1">
    <location>
        <begin position="22"/>
        <end position="47"/>
    </location>
</feature>
<feature type="disulfide bond" evidence="1">
    <location>
        <begin position="25"/>
        <end position="33"/>
    </location>
</feature>
<feature type="disulfide bond" evidence="1">
    <location>
        <begin position="39"/>
        <end position="65"/>
    </location>
</feature>
<feature type="disulfide bond" evidence="1">
    <location>
        <begin position="92"/>
        <end position="97"/>
    </location>
</feature>